<feature type="chain" id="PRO_1000197287" description="3-hydroxyacyl-[acyl-carrier-protein] dehydratase FabZ">
    <location>
        <begin position="1"/>
        <end position="142"/>
    </location>
</feature>
<feature type="active site" evidence="1">
    <location>
        <position position="50"/>
    </location>
</feature>
<dbReference type="EC" id="4.2.1.59"/>
<dbReference type="EMBL" id="CP000721">
    <property type="protein sequence ID" value="ABR33258.1"/>
    <property type="molecule type" value="Genomic_DNA"/>
</dbReference>
<dbReference type="RefSeq" id="WP_011968417.1">
    <property type="nucleotide sequence ID" value="NC_009617.1"/>
</dbReference>
<dbReference type="SMR" id="A6LSC8"/>
<dbReference type="KEGG" id="cbe:Cbei_1074"/>
<dbReference type="eggNOG" id="COG0764">
    <property type="taxonomic scope" value="Bacteria"/>
</dbReference>
<dbReference type="HOGENOM" id="CLU_078912_3_0_9"/>
<dbReference type="Proteomes" id="UP000000565">
    <property type="component" value="Chromosome"/>
</dbReference>
<dbReference type="GO" id="GO:0005737">
    <property type="term" value="C:cytoplasm"/>
    <property type="evidence" value="ECO:0007669"/>
    <property type="project" value="UniProtKB-SubCell"/>
</dbReference>
<dbReference type="GO" id="GO:0016020">
    <property type="term" value="C:membrane"/>
    <property type="evidence" value="ECO:0007669"/>
    <property type="project" value="GOC"/>
</dbReference>
<dbReference type="GO" id="GO:0019171">
    <property type="term" value="F:(3R)-hydroxyacyl-[acyl-carrier-protein] dehydratase activity"/>
    <property type="evidence" value="ECO:0007669"/>
    <property type="project" value="UniProtKB-EC"/>
</dbReference>
<dbReference type="GO" id="GO:0006633">
    <property type="term" value="P:fatty acid biosynthetic process"/>
    <property type="evidence" value="ECO:0007669"/>
    <property type="project" value="UniProtKB-UniRule"/>
</dbReference>
<dbReference type="GO" id="GO:0009245">
    <property type="term" value="P:lipid A biosynthetic process"/>
    <property type="evidence" value="ECO:0007669"/>
    <property type="project" value="UniProtKB-UniRule"/>
</dbReference>
<dbReference type="CDD" id="cd01288">
    <property type="entry name" value="FabZ"/>
    <property type="match status" value="1"/>
</dbReference>
<dbReference type="FunFam" id="3.10.129.10:FF:000001">
    <property type="entry name" value="3-hydroxyacyl-[acyl-carrier-protein] dehydratase FabZ"/>
    <property type="match status" value="1"/>
</dbReference>
<dbReference type="Gene3D" id="3.10.129.10">
    <property type="entry name" value="Hotdog Thioesterase"/>
    <property type="match status" value="1"/>
</dbReference>
<dbReference type="InterPro" id="IPR013114">
    <property type="entry name" value="FabA_FabZ"/>
</dbReference>
<dbReference type="InterPro" id="IPR010084">
    <property type="entry name" value="FabZ"/>
</dbReference>
<dbReference type="InterPro" id="IPR029069">
    <property type="entry name" value="HotDog_dom_sf"/>
</dbReference>
<dbReference type="NCBIfam" id="TIGR01750">
    <property type="entry name" value="fabZ"/>
    <property type="match status" value="1"/>
</dbReference>
<dbReference type="NCBIfam" id="NF000582">
    <property type="entry name" value="PRK00006.1"/>
    <property type="match status" value="1"/>
</dbReference>
<dbReference type="PANTHER" id="PTHR30272">
    <property type="entry name" value="3-HYDROXYACYL-[ACYL-CARRIER-PROTEIN] DEHYDRATASE"/>
    <property type="match status" value="1"/>
</dbReference>
<dbReference type="PANTHER" id="PTHR30272:SF1">
    <property type="entry name" value="3-HYDROXYACYL-[ACYL-CARRIER-PROTEIN] DEHYDRATASE"/>
    <property type="match status" value="1"/>
</dbReference>
<dbReference type="Pfam" id="PF07977">
    <property type="entry name" value="FabA"/>
    <property type="match status" value="1"/>
</dbReference>
<dbReference type="SUPFAM" id="SSF54637">
    <property type="entry name" value="Thioesterase/thiol ester dehydrase-isomerase"/>
    <property type="match status" value="1"/>
</dbReference>
<sequence>MLNINEIKKIIPHRYPMLLIDRVTEMEIEEKQFVRGYKNVSANEAFFQGHYPEEPIMPGVLQVEALAQTGTVAILSMERFKGKTPLFAGINKVRFKGKVVPGDKLDLYCEIIKIKGPIGIGKGIASVDGKTVCEAEILFALQ</sequence>
<name>FABZ_CLOB8</name>
<gene>
    <name type="primary">fabZ</name>
    <name type="ordered locus">Cbei_1074</name>
</gene>
<comment type="function">
    <text evidence="1">Involved in unsaturated fatty acids biosynthesis. Catalyzes the dehydration of short chain beta-hydroxyacyl-ACPs and long chain saturated and unsaturated beta-hydroxyacyl-ACPs (By similarity).</text>
</comment>
<comment type="catalytic activity">
    <reaction>
        <text>a (3R)-hydroxyacyl-[ACP] = a (2E)-enoyl-[ACP] + H2O</text>
        <dbReference type="Rhea" id="RHEA:13097"/>
        <dbReference type="Rhea" id="RHEA-COMP:9925"/>
        <dbReference type="Rhea" id="RHEA-COMP:9945"/>
        <dbReference type="ChEBI" id="CHEBI:15377"/>
        <dbReference type="ChEBI" id="CHEBI:78784"/>
        <dbReference type="ChEBI" id="CHEBI:78827"/>
        <dbReference type="EC" id="4.2.1.59"/>
    </reaction>
</comment>
<comment type="subcellular location">
    <subcellularLocation>
        <location evidence="1">Cytoplasm</location>
    </subcellularLocation>
</comment>
<comment type="similarity">
    <text evidence="2">Belongs to the thioester dehydratase family. FabZ subfamily.</text>
</comment>
<protein>
    <recommendedName>
        <fullName>3-hydroxyacyl-[acyl-carrier-protein] dehydratase FabZ</fullName>
        <ecNumber>4.2.1.59</ecNumber>
    </recommendedName>
    <alternativeName>
        <fullName>(3R)-hydroxymyristoyl-[acyl-carrier-protein] dehydratase</fullName>
        <shortName>(3R)-hydroxymyristoyl-ACP dehydrase</shortName>
    </alternativeName>
    <alternativeName>
        <fullName>Beta-hydroxyacyl-ACP dehydratase</fullName>
    </alternativeName>
</protein>
<keyword id="KW-0963">Cytoplasm</keyword>
<keyword id="KW-0441">Lipid A biosynthesis</keyword>
<keyword id="KW-0444">Lipid biosynthesis</keyword>
<keyword id="KW-0443">Lipid metabolism</keyword>
<keyword id="KW-0456">Lyase</keyword>
<organism>
    <name type="scientific">Clostridium beijerinckii (strain ATCC 51743 / NCIMB 8052)</name>
    <name type="common">Clostridium acetobutylicum</name>
    <dbReference type="NCBI Taxonomy" id="290402"/>
    <lineage>
        <taxon>Bacteria</taxon>
        <taxon>Bacillati</taxon>
        <taxon>Bacillota</taxon>
        <taxon>Clostridia</taxon>
        <taxon>Eubacteriales</taxon>
        <taxon>Clostridiaceae</taxon>
        <taxon>Clostridium</taxon>
    </lineage>
</organism>
<evidence type="ECO:0000250" key="1"/>
<evidence type="ECO:0000305" key="2"/>
<reference key="1">
    <citation type="submission" date="2007-06" db="EMBL/GenBank/DDBJ databases">
        <title>Complete sequence of Clostridium beijerinckii NCIMB 8052.</title>
        <authorList>
            <consortium name="US DOE Joint Genome Institute"/>
            <person name="Copeland A."/>
            <person name="Lucas S."/>
            <person name="Lapidus A."/>
            <person name="Barry K."/>
            <person name="Detter J.C."/>
            <person name="Glavina del Rio T."/>
            <person name="Hammon N."/>
            <person name="Israni S."/>
            <person name="Dalin E."/>
            <person name="Tice H."/>
            <person name="Pitluck S."/>
            <person name="Sims D."/>
            <person name="Brettin T."/>
            <person name="Bruce D."/>
            <person name="Tapia R."/>
            <person name="Brainard J."/>
            <person name="Schmutz J."/>
            <person name="Larimer F."/>
            <person name="Land M."/>
            <person name="Hauser L."/>
            <person name="Kyrpides N."/>
            <person name="Mikhailova N."/>
            <person name="Bennet G."/>
            <person name="Cann I."/>
            <person name="Chen J.-S."/>
            <person name="Contreras A.L."/>
            <person name="Jones D."/>
            <person name="Kashket E."/>
            <person name="Mitchell W."/>
            <person name="Stoddard S."/>
            <person name="Schwarz W."/>
            <person name="Qureshi N."/>
            <person name="Young M."/>
            <person name="Shi Z."/>
            <person name="Ezeji T."/>
            <person name="White B."/>
            <person name="Blaschek H."/>
            <person name="Richardson P."/>
        </authorList>
    </citation>
    <scope>NUCLEOTIDE SEQUENCE [LARGE SCALE GENOMIC DNA]</scope>
    <source>
        <strain>ATCC 51743 / NCIMB 8052</strain>
    </source>
</reference>
<proteinExistence type="inferred from homology"/>
<accession>A6LSC8</accession>